<reference key="1">
    <citation type="journal article" date="1996" name="Nucleic Acids Res.">
        <title>Complete sequence analysis of the genome of the bacterium Mycoplasma pneumoniae.</title>
        <authorList>
            <person name="Himmelreich R."/>
            <person name="Hilbert H."/>
            <person name="Plagens H."/>
            <person name="Pirkl E."/>
            <person name="Li B.-C."/>
            <person name="Herrmann R."/>
        </authorList>
    </citation>
    <scope>NUCLEOTIDE SEQUENCE [LARGE SCALE GENOMIC DNA]</scope>
    <source>
        <strain>ATCC 29342 / M129 / Subtype 1</strain>
    </source>
</reference>
<feature type="chain" id="PRO_0000221598" description="UPF0134 protein MPN_137">
    <location>
        <begin position="1"/>
        <end position="228"/>
    </location>
</feature>
<proteinExistence type="inferred from homology"/>
<keyword id="KW-1185">Reference proteome</keyword>
<sequence length="228" mass="26777">MEKKPWEEDISIEEFKKSLNKDKITNLIIKRRWNKGKSTYHLSFNGDFEVVTKKPSTKYVTHKQLDQKLKEFKQDLMVELHDTFATKADLRDSEARINQKLEALVQVVLLHGEQINKLTQIVEKQGEQIRELQVEQKAQRQEFNARMDRLENLLVESIESTNKRFDSIEGRLDSMDSRLDSMENRLDSIEGRLDSVEGRLDSVEGRLDSMENRLDSMETRLDKIDPPK</sequence>
<gene>
    <name type="ordered locus">MPN_137</name>
    <name type="ORF">E07_orf228</name>
    <name type="ORF">MP017</name>
</gene>
<evidence type="ECO:0000305" key="1"/>
<dbReference type="EMBL" id="U00089">
    <property type="protein sequence ID" value="AAB95665.1"/>
    <property type="molecule type" value="Genomic_DNA"/>
</dbReference>
<dbReference type="PIR" id="S73343">
    <property type="entry name" value="S73343"/>
</dbReference>
<dbReference type="RefSeq" id="NP_109825.1">
    <property type="nucleotide sequence ID" value="NC_000912.1"/>
</dbReference>
<dbReference type="RefSeq" id="WP_010874494.1">
    <property type="nucleotide sequence ID" value="NZ_OU342337.1"/>
</dbReference>
<dbReference type="SMR" id="P75261"/>
<dbReference type="IntAct" id="P75261">
    <property type="interactions" value="1"/>
</dbReference>
<dbReference type="STRING" id="272634.MPN_137"/>
<dbReference type="EnsemblBacteria" id="AAB95665">
    <property type="protein sequence ID" value="AAB95665"/>
    <property type="gene ID" value="MPN_137"/>
</dbReference>
<dbReference type="KEGG" id="mpn:MPN_137"/>
<dbReference type="HOGENOM" id="CLU_089620_0_0_14"/>
<dbReference type="BioCyc" id="MPNE272634:G1GJ3-231-MONOMER"/>
<dbReference type="Proteomes" id="UP000000808">
    <property type="component" value="Chromosome"/>
</dbReference>
<dbReference type="Gene3D" id="1.20.5.170">
    <property type="match status" value="1"/>
</dbReference>
<dbReference type="Gene3D" id="6.10.250.40">
    <property type="match status" value="2"/>
</dbReference>
<dbReference type="InterPro" id="IPR002862">
    <property type="entry name" value="DUF16"/>
</dbReference>
<dbReference type="Pfam" id="PF01519">
    <property type="entry name" value="DUF16"/>
    <property type="match status" value="1"/>
</dbReference>
<dbReference type="SUPFAM" id="SSF144266">
    <property type="entry name" value="MPN010-like"/>
    <property type="match status" value="1"/>
</dbReference>
<dbReference type="SUPFAM" id="SSF57997">
    <property type="entry name" value="Tropomyosin"/>
    <property type="match status" value="1"/>
</dbReference>
<comment type="similarity">
    <text evidence="1">Belongs to the UPF0134 family.</text>
</comment>
<organism>
    <name type="scientific">Mycoplasma pneumoniae (strain ATCC 29342 / M129 / Subtype 1)</name>
    <name type="common">Mycoplasmoides pneumoniae</name>
    <dbReference type="NCBI Taxonomy" id="272634"/>
    <lineage>
        <taxon>Bacteria</taxon>
        <taxon>Bacillati</taxon>
        <taxon>Mycoplasmatota</taxon>
        <taxon>Mycoplasmoidales</taxon>
        <taxon>Mycoplasmoidaceae</taxon>
        <taxon>Mycoplasmoides</taxon>
    </lineage>
</organism>
<name>Y137_MYCPN</name>
<accession>P75261</accession>
<protein>
    <recommendedName>
        <fullName>UPF0134 protein MPN_137</fullName>
    </recommendedName>
</protein>